<keyword id="KW-0472">Membrane</keyword>
<keyword id="KW-0496">Mitochondrion</keyword>
<keyword id="KW-0999">Mitochondrion inner membrane</keyword>
<keyword id="KW-1185">Reference proteome</keyword>
<keyword id="KW-1278">Translocase</keyword>
<keyword id="KW-0812">Transmembrane</keyword>
<keyword id="KW-1133">Transmembrane helix</keyword>
<feature type="chain" id="PRO_0000356871" description="Cytochrome c oxidase subunit 3">
    <location>
        <begin position="1"/>
        <end position="270"/>
    </location>
</feature>
<feature type="transmembrane region" description="Helical" evidence="2">
    <location>
        <begin position="22"/>
        <end position="42"/>
    </location>
</feature>
<feature type="transmembrane region" description="Helical" evidence="2">
    <location>
        <begin position="46"/>
        <end position="66"/>
    </location>
</feature>
<feature type="transmembrane region" description="Helical" evidence="2">
    <location>
        <begin position="88"/>
        <end position="108"/>
    </location>
</feature>
<feature type="transmembrane region" description="Helical" evidence="2">
    <location>
        <begin position="128"/>
        <end position="148"/>
    </location>
</feature>
<feature type="transmembrane region" description="Helical" evidence="2">
    <location>
        <begin position="168"/>
        <end position="188"/>
    </location>
</feature>
<feature type="transmembrane region" description="Helical" evidence="2">
    <location>
        <begin position="205"/>
        <end position="225"/>
    </location>
</feature>
<feature type="transmembrane region" description="Helical" evidence="2">
    <location>
        <begin position="248"/>
        <end position="268"/>
    </location>
</feature>
<accession>A6H4Q3</accession>
<comment type="function">
    <text evidence="1">Component of the cytochrome c oxidase, the last enzyme in the mitochondrial electron transport chain which drives oxidative phosphorylation. The respiratory chain contains 3 multisubunit complexes succinate dehydrogenase (complex II, CII), ubiquinol-cytochrome c oxidoreductase (cytochrome b-c1 complex, complex III, CIII) and cytochrome c oxidase (complex IV, CIV), that cooperate to transfer electrons derived from NADH and succinate to molecular oxygen, creating an electrochemical gradient over the inner membrane that drives transmembrane transport and the ATP synthase. Cytochrome c oxidase is the component of the respiratory chain that catalyzes the reduction of oxygen to water. Electrons originating from reduced cytochrome c in the intermembrane space (IMS) are transferred via the dinuclear copper A center (CU(A)) of subunit 2 and heme A of subunit 1 to the active site in subunit 1, a binuclear center (BNC) formed by heme A3 and copper B (CU(B)). The BNC reduces molecular oxygen to 2 water molecules using 4 electrons from cytochrome c in the IMS and 4 protons from the mitochondrial matrix.</text>
</comment>
<comment type="catalytic activity">
    <reaction evidence="1">
        <text>4 Fe(II)-[cytochrome c] + O2 + 8 H(+)(in) = 4 Fe(III)-[cytochrome c] + 2 H2O + 4 H(+)(out)</text>
        <dbReference type="Rhea" id="RHEA:11436"/>
        <dbReference type="Rhea" id="RHEA-COMP:10350"/>
        <dbReference type="Rhea" id="RHEA-COMP:14399"/>
        <dbReference type="ChEBI" id="CHEBI:15377"/>
        <dbReference type="ChEBI" id="CHEBI:15378"/>
        <dbReference type="ChEBI" id="CHEBI:15379"/>
        <dbReference type="ChEBI" id="CHEBI:29033"/>
        <dbReference type="ChEBI" id="CHEBI:29034"/>
        <dbReference type="EC" id="7.1.1.9"/>
    </reaction>
    <physiologicalReaction direction="left-to-right" evidence="1">
        <dbReference type="Rhea" id="RHEA:11437"/>
    </physiologicalReaction>
</comment>
<comment type="subunit">
    <text evidence="1">Component of the cytochrome c oxidase (complex IV, CIV), a multisubunit enzyme composed of a catalytic core of 3 subunits and several supernumerary subunits. The complex exists as a monomer or a dimer and forms supercomplexes (SCs) in the inner mitochondrial membrane with ubiquinol-cytochrome c oxidoreductase (cytochrome b-c1 complex, complex III, CIII).</text>
</comment>
<comment type="subcellular location">
    <subcellularLocation>
        <location evidence="1">Mitochondrion inner membrane</location>
        <topology evidence="1">Multi-pass membrane protein</topology>
    </subcellularLocation>
</comment>
<comment type="similarity">
    <text evidence="3">Belongs to the cytochrome c oxidase subunit 3 family.</text>
</comment>
<dbReference type="EC" id="7.1.1.9"/>
<dbReference type="EMBL" id="AM698041">
    <property type="protein sequence ID" value="CAN85576.1"/>
    <property type="molecule type" value="Genomic_DNA"/>
</dbReference>
<dbReference type="RefSeq" id="YP_001331015.1">
    <property type="nucleotide sequence ID" value="NC_009638.1"/>
</dbReference>
<dbReference type="SMR" id="A6H4Q3"/>
<dbReference type="FunCoup" id="A6H4Q3">
    <property type="interactions" value="247"/>
</dbReference>
<dbReference type="STRING" id="436907.A6H4Q3"/>
<dbReference type="KEGG" id="vpo:VapofMp03"/>
<dbReference type="InParanoid" id="A6H4Q3"/>
<dbReference type="Proteomes" id="UP000000267">
    <property type="component" value="Mitochondrion"/>
</dbReference>
<dbReference type="GO" id="GO:0005743">
    <property type="term" value="C:mitochondrial inner membrane"/>
    <property type="evidence" value="ECO:0007669"/>
    <property type="project" value="UniProtKB-SubCell"/>
</dbReference>
<dbReference type="GO" id="GO:0004129">
    <property type="term" value="F:cytochrome-c oxidase activity"/>
    <property type="evidence" value="ECO:0007669"/>
    <property type="project" value="UniProtKB-EC"/>
</dbReference>
<dbReference type="GO" id="GO:0006123">
    <property type="term" value="P:mitochondrial electron transport, cytochrome c to oxygen"/>
    <property type="evidence" value="ECO:0007669"/>
    <property type="project" value="TreeGrafter"/>
</dbReference>
<dbReference type="CDD" id="cd01665">
    <property type="entry name" value="Cyt_c_Oxidase_III"/>
    <property type="match status" value="1"/>
</dbReference>
<dbReference type="FunFam" id="1.10.287.70:FF:000082">
    <property type="entry name" value="Cytochrome c oxidase subunit 3"/>
    <property type="match status" value="1"/>
</dbReference>
<dbReference type="FunFam" id="1.20.120.80:FF:000002">
    <property type="entry name" value="Cytochrome c oxidase subunit 3"/>
    <property type="match status" value="1"/>
</dbReference>
<dbReference type="Gene3D" id="1.10.287.70">
    <property type="match status" value="1"/>
</dbReference>
<dbReference type="Gene3D" id="1.20.120.80">
    <property type="entry name" value="Cytochrome c oxidase, subunit III, four-helix bundle"/>
    <property type="match status" value="1"/>
</dbReference>
<dbReference type="InterPro" id="IPR024791">
    <property type="entry name" value="Cyt_c/ubiquinol_Oxase_su3"/>
</dbReference>
<dbReference type="InterPro" id="IPR033945">
    <property type="entry name" value="Cyt_c_oxase_su3_dom"/>
</dbReference>
<dbReference type="InterPro" id="IPR000298">
    <property type="entry name" value="Cyt_c_oxidase-like_su3"/>
</dbReference>
<dbReference type="InterPro" id="IPR035973">
    <property type="entry name" value="Cyt_c_oxidase_su3-like_sf"/>
</dbReference>
<dbReference type="InterPro" id="IPR013833">
    <property type="entry name" value="Cyt_c_oxidase_su3_a-hlx"/>
</dbReference>
<dbReference type="PANTHER" id="PTHR11403:SF7">
    <property type="entry name" value="CYTOCHROME C OXIDASE SUBUNIT 3"/>
    <property type="match status" value="1"/>
</dbReference>
<dbReference type="PANTHER" id="PTHR11403">
    <property type="entry name" value="CYTOCHROME C OXIDASE SUBUNIT III"/>
    <property type="match status" value="1"/>
</dbReference>
<dbReference type="Pfam" id="PF00510">
    <property type="entry name" value="COX3"/>
    <property type="match status" value="1"/>
</dbReference>
<dbReference type="SUPFAM" id="SSF81452">
    <property type="entry name" value="Cytochrome c oxidase subunit III-like"/>
    <property type="match status" value="1"/>
</dbReference>
<dbReference type="PROSITE" id="PS50253">
    <property type="entry name" value="COX3"/>
    <property type="match status" value="1"/>
</dbReference>
<reference key="1">
    <citation type="journal article" date="2007" name="Proc. Natl. Acad. Sci. U.S.A.">
        <title>Independent sorting-out of thousands of duplicated gene pairs in two yeast species descended from a whole-genome duplication.</title>
        <authorList>
            <person name="Scannell D.R."/>
            <person name="Frank A.C."/>
            <person name="Conant G.C."/>
            <person name="Byrne K.P."/>
            <person name="Woolfit M."/>
            <person name="Wolfe K.H."/>
        </authorList>
    </citation>
    <scope>NUCLEOTIDE SEQUENCE [LARGE SCALE GENOMIC DNA]</scope>
    <source>
        <strain>ATCC 22028 / DSM 70294 / BCRC 21397 / CBS 2163 / NBRC 10782 / NRRL Y-8283 / UCD 57-17</strain>
    </source>
</reference>
<evidence type="ECO:0000250" key="1">
    <source>
        <dbReference type="UniProtKB" id="P00420"/>
    </source>
</evidence>
<evidence type="ECO:0000255" key="2"/>
<evidence type="ECO:0000305" key="3"/>
<proteinExistence type="inferred from homology"/>
<sequence length="270" mass="30483">MLNYMERSKHQQFPFHLVNPSPWPIVVSFSLLSLALSLGLTMHGYIGEMYLVNLALLVVLGSGVLWFRDIIAEATYLGDHTAAVRKGINIGFLLFVLSEVLIFSALFWSYFHSAMSPDVTLGACWPPVGITAVQPTELPLLNTIILLASGATVTYSHHALIQGNRKNSLSGLLITTWLIIIFVICQYIEYTNATFTISDGVYGSVFFAGTGLHFLHMVMLAIMLAVCYWRLRNYHLTNSHHVGYETTIIYLHVLDVIWLFLYIVFYWWGV</sequence>
<gene>
    <name type="primary">COX3</name>
    <name type="ORF">VapofMp03</name>
</gene>
<organism>
    <name type="scientific">Vanderwaltozyma polyspora (strain ATCC 22028 / DSM 70294 / BCRC 21397 / CBS 2163 / NBRC 10782 / NRRL Y-8283 / UCD 57-17)</name>
    <name type="common">Kluyveromyces polysporus</name>
    <dbReference type="NCBI Taxonomy" id="436907"/>
    <lineage>
        <taxon>Eukaryota</taxon>
        <taxon>Fungi</taxon>
        <taxon>Dikarya</taxon>
        <taxon>Ascomycota</taxon>
        <taxon>Saccharomycotina</taxon>
        <taxon>Saccharomycetes</taxon>
        <taxon>Saccharomycetales</taxon>
        <taxon>Saccharomycetaceae</taxon>
        <taxon>Vanderwaltozyma</taxon>
    </lineage>
</organism>
<geneLocation type="mitochondrion"/>
<name>COX3_VANPO</name>
<protein>
    <recommendedName>
        <fullName>Cytochrome c oxidase subunit 3</fullName>
        <ecNumber>7.1.1.9</ecNumber>
    </recommendedName>
    <alternativeName>
        <fullName>Cytochrome c oxidase polypeptide III</fullName>
    </alternativeName>
    <alternativeName>
        <fullName>Cytochrome oxidase subunit 3</fullName>
    </alternativeName>
</protein>